<reference key="1">
    <citation type="journal article" date="2002" name="Proc. Natl. Acad. Sci. U.S.A.">
        <title>Extensive mosaic structure revealed by the complete genome sequence of uropathogenic Escherichia coli.</title>
        <authorList>
            <person name="Welch R.A."/>
            <person name="Burland V."/>
            <person name="Plunkett G. III"/>
            <person name="Redford P."/>
            <person name="Roesch P."/>
            <person name="Rasko D."/>
            <person name="Buckles E.L."/>
            <person name="Liou S.-R."/>
            <person name="Boutin A."/>
            <person name="Hackett J."/>
            <person name="Stroud D."/>
            <person name="Mayhew G.F."/>
            <person name="Rose D.J."/>
            <person name="Zhou S."/>
            <person name="Schwartz D.C."/>
            <person name="Perna N.T."/>
            <person name="Mobley H.L.T."/>
            <person name="Donnenberg M.S."/>
            <person name="Blattner F.R."/>
        </authorList>
    </citation>
    <scope>NUCLEOTIDE SEQUENCE [LARGE SCALE GENOMIC DNA]</scope>
    <source>
        <strain>CFT073 / ATCC 700928 / UPEC</strain>
    </source>
</reference>
<proteinExistence type="inferred from homology"/>
<evidence type="ECO:0000255" key="1">
    <source>
        <dbReference type="HAMAP-Rule" id="MF_01914"/>
    </source>
</evidence>
<evidence type="ECO:0000256" key="2">
    <source>
        <dbReference type="SAM" id="MobiDB-lite"/>
    </source>
</evidence>
<evidence type="ECO:0000305" key="3"/>
<dbReference type="EMBL" id="AE014075">
    <property type="protein sequence ID" value="AAN82400.1"/>
    <property type="status" value="ALT_INIT"/>
    <property type="molecule type" value="Genomic_DNA"/>
</dbReference>
<dbReference type="RefSeq" id="WP_000669785.1">
    <property type="nucleotide sequence ID" value="NZ_CP051263.1"/>
</dbReference>
<dbReference type="SMR" id="P0ADV2"/>
<dbReference type="STRING" id="199310.c3960"/>
<dbReference type="GeneID" id="93778781"/>
<dbReference type="KEGG" id="ecc:c3960"/>
<dbReference type="eggNOG" id="COG1934">
    <property type="taxonomic scope" value="Bacteria"/>
</dbReference>
<dbReference type="HOGENOM" id="CLU_095993_2_1_6"/>
<dbReference type="Proteomes" id="UP000001410">
    <property type="component" value="Chromosome"/>
</dbReference>
<dbReference type="GO" id="GO:0009279">
    <property type="term" value="C:cell outer membrane"/>
    <property type="evidence" value="ECO:0007669"/>
    <property type="project" value="TreeGrafter"/>
</dbReference>
<dbReference type="GO" id="GO:0030288">
    <property type="term" value="C:outer membrane-bounded periplasmic space"/>
    <property type="evidence" value="ECO:0007669"/>
    <property type="project" value="TreeGrafter"/>
</dbReference>
<dbReference type="GO" id="GO:0017089">
    <property type="term" value="F:glycolipid transfer activity"/>
    <property type="evidence" value="ECO:0007669"/>
    <property type="project" value="TreeGrafter"/>
</dbReference>
<dbReference type="GO" id="GO:0001530">
    <property type="term" value="F:lipopolysaccharide binding"/>
    <property type="evidence" value="ECO:0007669"/>
    <property type="project" value="InterPro"/>
</dbReference>
<dbReference type="GO" id="GO:0043165">
    <property type="term" value="P:Gram-negative-bacterium-type cell outer membrane assembly"/>
    <property type="evidence" value="ECO:0007669"/>
    <property type="project" value="UniProtKB-UniRule"/>
</dbReference>
<dbReference type="GO" id="GO:0015920">
    <property type="term" value="P:lipopolysaccharide transport"/>
    <property type="evidence" value="ECO:0007669"/>
    <property type="project" value="UniProtKB-UniRule"/>
</dbReference>
<dbReference type="FunFam" id="2.60.450.10:FF:000002">
    <property type="entry name" value="Lipopolysaccharide export system protein LptA"/>
    <property type="match status" value="1"/>
</dbReference>
<dbReference type="Gene3D" id="2.60.450.10">
    <property type="entry name" value="Lipopolysaccharide (LPS) transport protein A like domain"/>
    <property type="match status" value="1"/>
</dbReference>
<dbReference type="HAMAP" id="MF_01914">
    <property type="entry name" value="LPS_assembly_LptA"/>
    <property type="match status" value="1"/>
</dbReference>
<dbReference type="InterPro" id="IPR052037">
    <property type="entry name" value="LPS_export_LptA"/>
</dbReference>
<dbReference type="InterPro" id="IPR014340">
    <property type="entry name" value="LptA"/>
</dbReference>
<dbReference type="InterPro" id="IPR005653">
    <property type="entry name" value="OstA-like_N"/>
</dbReference>
<dbReference type="NCBIfam" id="TIGR03002">
    <property type="entry name" value="outer_YhbN_LptA"/>
    <property type="match status" value="1"/>
</dbReference>
<dbReference type="NCBIfam" id="NF008143">
    <property type="entry name" value="PRK10894.1"/>
    <property type="match status" value="1"/>
</dbReference>
<dbReference type="PANTHER" id="PTHR36504">
    <property type="entry name" value="LIPOPOLYSACCHARIDE EXPORT SYSTEM PROTEIN LPTA"/>
    <property type="match status" value="1"/>
</dbReference>
<dbReference type="PANTHER" id="PTHR36504:SF1">
    <property type="entry name" value="LIPOPOLYSACCHARIDE EXPORT SYSTEM PROTEIN LPTA"/>
    <property type="match status" value="1"/>
</dbReference>
<dbReference type="Pfam" id="PF03968">
    <property type="entry name" value="LptD_N"/>
    <property type="match status" value="1"/>
</dbReference>
<sequence>MKFKTNKLSLNLVLASSLLAASIPAFAVTGDTDQPIHIESDQQSLDMQGNVVTFTGNVIVTQGTIKINADKVVVTRPGGEQGKEVIDGYGKPATFYQMQDNGKPVEGHASQMHYELAKDFVVLTGNAYLQQVDSNIKGDKITYLVKEQKMQAFSDKGKRVTTVLVPSQLQDKNNKGQTPAQKKGN</sequence>
<name>LPTA_ECOL6</name>
<feature type="signal peptide" evidence="1">
    <location>
        <begin position="1"/>
        <end position="27"/>
    </location>
</feature>
<feature type="chain" id="PRO_0000043110" description="Lipopolysaccharide export system protein LptA">
    <location>
        <begin position="28"/>
        <end position="185"/>
    </location>
</feature>
<feature type="region of interest" description="Disordered" evidence="2">
    <location>
        <begin position="166"/>
        <end position="185"/>
    </location>
</feature>
<keyword id="KW-0574">Periplasm</keyword>
<keyword id="KW-1185">Reference proteome</keyword>
<keyword id="KW-0732">Signal</keyword>
<keyword id="KW-0813">Transport</keyword>
<comment type="function">
    <text evidence="1">Involved in the assembly of lipopolysaccharide (LPS). Required for the translocation of LPS from the inner membrane to the outer membrane. May form a bridge between the inner membrane and the outer membrane, via interactions with LptC and LptD, thereby facilitating LPS transfer across the periplasm.</text>
</comment>
<comment type="subunit">
    <text evidence="1">Component of the lipopolysaccharide transport and assembly complex.</text>
</comment>
<comment type="subcellular location">
    <subcellularLocation>
        <location evidence="1">Periplasm</location>
    </subcellularLocation>
</comment>
<comment type="similarity">
    <text evidence="1">Belongs to the LptA family.</text>
</comment>
<comment type="sequence caution" evidence="3">
    <conflict type="erroneous initiation">
        <sequence resource="EMBL-CDS" id="AAN82400"/>
    </conflict>
    <text>Extended N-terminus.</text>
</comment>
<gene>
    <name evidence="1" type="primary">lptA</name>
    <name type="ordered locus">c3960</name>
</gene>
<accession>P0ADV2</accession>
<accession>P38685</accession>
<organism>
    <name type="scientific">Escherichia coli O6:H1 (strain CFT073 / ATCC 700928 / UPEC)</name>
    <dbReference type="NCBI Taxonomy" id="199310"/>
    <lineage>
        <taxon>Bacteria</taxon>
        <taxon>Pseudomonadati</taxon>
        <taxon>Pseudomonadota</taxon>
        <taxon>Gammaproteobacteria</taxon>
        <taxon>Enterobacterales</taxon>
        <taxon>Enterobacteriaceae</taxon>
        <taxon>Escherichia</taxon>
    </lineage>
</organism>
<protein>
    <recommendedName>
        <fullName evidence="1">Lipopolysaccharide export system protein LptA</fullName>
    </recommendedName>
</protein>